<accession>B2T5K0</accession>
<organism>
    <name type="scientific">Paraburkholderia phytofirmans (strain DSM 17436 / LMG 22146 / PsJN)</name>
    <name type="common">Burkholderia phytofirmans</name>
    <dbReference type="NCBI Taxonomy" id="398527"/>
    <lineage>
        <taxon>Bacteria</taxon>
        <taxon>Pseudomonadati</taxon>
        <taxon>Pseudomonadota</taxon>
        <taxon>Betaproteobacteria</taxon>
        <taxon>Burkholderiales</taxon>
        <taxon>Burkholderiaceae</taxon>
        <taxon>Paraburkholderia</taxon>
    </lineage>
</organism>
<sequence length="688" mass="75029">MARTSASHPATSAPAERAAWLRAELERANYAYYVLDQPDLPDAEYDKLFKELESIETEHPDLIVPDSPTQRVGGEAASGFEPVVHDQPMLSLNNGFADEDIVAFDKRVGDALGKNASEPPVPVDYAAELKFDGLAISLRYVDGAFVQASTRGDGTTGENVTENVRTIRSIPLKLKGKRVPHVLDVRGEVLMFKRDFERLNERQRAAEQKEFANPRNAAAGSLRQLDSKITAQRPLSFFAYGIGVLEGMEMPATHSELLDWYKELGLPVNSERAVVQGAEGLLGFFHGVGEKREKLPYDIDGVVYKVNRRDEQDALGFVSRAPRFALAHKFPAQEALTKLVAIDVQVGRTGAITPVARLEPVFVGGATVTNATLHNEDEVRRKDIRIGDTVIVRRAGDVIPEVVSALLDRRPSDAREFVMPTQCPVCGSSIERLPDEAIARCTGGLFCPAQRKQALWHFAQRRALDIDGLGEKIIDQLVEQNLVRTPADLFNIGFATLAELDRFAEKSAQNLLDSLEKAKHTTLARFIYALGIRHVGESTAKDLAKHFGSLDPIMDASVEALLEVNDVGPVVAESIHQFFAEEHNRTVIEQLRAPGKVTWPEGPPAPKAPQGVLAGKTVVLTGTLPSLAREEAKEMLEAAGAKVAGSVSKKTDYLVAGADAGSKLAKAEELGVPVLDEDGMRKLLEGQL</sequence>
<proteinExistence type="inferred from homology"/>
<feature type="chain" id="PRO_0000380327" description="DNA ligase">
    <location>
        <begin position="1"/>
        <end position="688"/>
    </location>
</feature>
<feature type="domain" description="BRCT" evidence="1">
    <location>
        <begin position="608"/>
        <end position="688"/>
    </location>
</feature>
<feature type="active site" description="N6-AMP-lysine intermediate" evidence="1">
    <location>
        <position position="130"/>
    </location>
</feature>
<feature type="binding site" evidence="1">
    <location>
        <begin position="42"/>
        <end position="46"/>
    </location>
    <ligand>
        <name>NAD(+)</name>
        <dbReference type="ChEBI" id="CHEBI:57540"/>
    </ligand>
</feature>
<feature type="binding site" evidence="1">
    <location>
        <begin position="91"/>
        <end position="92"/>
    </location>
    <ligand>
        <name>NAD(+)</name>
        <dbReference type="ChEBI" id="CHEBI:57540"/>
    </ligand>
</feature>
<feature type="binding site" evidence="1">
    <location>
        <position position="128"/>
    </location>
    <ligand>
        <name>NAD(+)</name>
        <dbReference type="ChEBI" id="CHEBI:57540"/>
    </ligand>
</feature>
<feature type="binding site" evidence="1">
    <location>
        <position position="151"/>
    </location>
    <ligand>
        <name>NAD(+)</name>
        <dbReference type="ChEBI" id="CHEBI:57540"/>
    </ligand>
</feature>
<feature type="binding site" evidence="1">
    <location>
        <position position="188"/>
    </location>
    <ligand>
        <name>NAD(+)</name>
        <dbReference type="ChEBI" id="CHEBI:57540"/>
    </ligand>
</feature>
<feature type="binding site" evidence="1">
    <location>
        <position position="305"/>
    </location>
    <ligand>
        <name>NAD(+)</name>
        <dbReference type="ChEBI" id="CHEBI:57540"/>
    </ligand>
</feature>
<feature type="binding site" evidence="1">
    <location>
        <position position="329"/>
    </location>
    <ligand>
        <name>NAD(+)</name>
        <dbReference type="ChEBI" id="CHEBI:57540"/>
    </ligand>
</feature>
<feature type="binding site" evidence="1">
    <location>
        <position position="423"/>
    </location>
    <ligand>
        <name>Zn(2+)</name>
        <dbReference type="ChEBI" id="CHEBI:29105"/>
    </ligand>
</feature>
<feature type="binding site" evidence="1">
    <location>
        <position position="426"/>
    </location>
    <ligand>
        <name>Zn(2+)</name>
        <dbReference type="ChEBI" id="CHEBI:29105"/>
    </ligand>
</feature>
<feature type="binding site" evidence="1">
    <location>
        <position position="441"/>
    </location>
    <ligand>
        <name>Zn(2+)</name>
        <dbReference type="ChEBI" id="CHEBI:29105"/>
    </ligand>
</feature>
<feature type="binding site" evidence="1">
    <location>
        <position position="447"/>
    </location>
    <ligand>
        <name>Zn(2+)</name>
        <dbReference type="ChEBI" id="CHEBI:29105"/>
    </ligand>
</feature>
<gene>
    <name evidence="1" type="primary">ligA</name>
    <name type="ordered locus">Bphyt_2461</name>
</gene>
<name>DNLJ_PARPJ</name>
<comment type="function">
    <text evidence="1">DNA ligase that catalyzes the formation of phosphodiester linkages between 5'-phosphoryl and 3'-hydroxyl groups in double-stranded DNA using NAD as a coenzyme and as the energy source for the reaction. It is essential for DNA replication and repair of damaged DNA.</text>
</comment>
<comment type="catalytic activity">
    <reaction evidence="1">
        <text>NAD(+) + (deoxyribonucleotide)n-3'-hydroxyl + 5'-phospho-(deoxyribonucleotide)m = (deoxyribonucleotide)n+m + AMP + beta-nicotinamide D-nucleotide.</text>
        <dbReference type="EC" id="6.5.1.2"/>
    </reaction>
</comment>
<comment type="cofactor">
    <cofactor evidence="1">
        <name>Mg(2+)</name>
        <dbReference type="ChEBI" id="CHEBI:18420"/>
    </cofactor>
    <cofactor evidence="1">
        <name>Mn(2+)</name>
        <dbReference type="ChEBI" id="CHEBI:29035"/>
    </cofactor>
</comment>
<comment type="similarity">
    <text evidence="1">Belongs to the NAD-dependent DNA ligase family. LigA subfamily.</text>
</comment>
<evidence type="ECO:0000255" key="1">
    <source>
        <dbReference type="HAMAP-Rule" id="MF_01588"/>
    </source>
</evidence>
<protein>
    <recommendedName>
        <fullName evidence="1">DNA ligase</fullName>
        <ecNumber evidence="1">6.5.1.2</ecNumber>
    </recommendedName>
    <alternativeName>
        <fullName evidence="1">Polydeoxyribonucleotide synthase [NAD(+)]</fullName>
    </alternativeName>
</protein>
<dbReference type="EC" id="6.5.1.2" evidence="1"/>
<dbReference type="EMBL" id="CP001052">
    <property type="protein sequence ID" value="ACD16857.1"/>
    <property type="molecule type" value="Genomic_DNA"/>
</dbReference>
<dbReference type="RefSeq" id="WP_012433454.1">
    <property type="nucleotide sequence ID" value="NC_010681.1"/>
</dbReference>
<dbReference type="SMR" id="B2T5K0"/>
<dbReference type="STRING" id="398527.Bphyt_2461"/>
<dbReference type="KEGG" id="bpy:Bphyt_2461"/>
<dbReference type="eggNOG" id="COG0272">
    <property type="taxonomic scope" value="Bacteria"/>
</dbReference>
<dbReference type="HOGENOM" id="CLU_007764_2_1_4"/>
<dbReference type="OrthoDB" id="9759736at2"/>
<dbReference type="Proteomes" id="UP000001739">
    <property type="component" value="Chromosome 1"/>
</dbReference>
<dbReference type="GO" id="GO:0005829">
    <property type="term" value="C:cytosol"/>
    <property type="evidence" value="ECO:0007669"/>
    <property type="project" value="TreeGrafter"/>
</dbReference>
<dbReference type="GO" id="GO:0003677">
    <property type="term" value="F:DNA binding"/>
    <property type="evidence" value="ECO:0007669"/>
    <property type="project" value="InterPro"/>
</dbReference>
<dbReference type="GO" id="GO:0003911">
    <property type="term" value="F:DNA ligase (NAD+) activity"/>
    <property type="evidence" value="ECO:0007669"/>
    <property type="project" value="UniProtKB-UniRule"/>
</dbReference>
<dbReference type="GO" id="GO:0046872">
    <property type="term" value="F:metal ion binding"/>
    <property type="evidence" value="ECO:0007669"/>
    <property type="project" value="UniProtKB-KW"/>
</dbReference>
<dbReference type="GO" id="GO:0006281">
    <property type="term" value="P:DNA repair"/>
    <property type="evidence" value="ECO:0007669"/>
    <property type="project" value="UniProtKB-KW"/>
</dbReference>
<dbReference type="GO" id="GO:0006260">
    <property type="term" value="P:DNA replication"/>
    <property type="evidence" value="ECO:0007669"/>
    <property type="project" value="UniProtKB-KW"/>
</dbReference>
<dbReference type="CDD" id="cd17748">
    <property type="entry name" value="BRCT_DNA_ligase_like"/>
    <property type="match status" value="1"/>
</dbReference>
<dbReference type="CDD" id="cd00114">
    <property type="entry name" value="LIGANc"/>
    <property type="match status" value="1"/>
</dbReference>
<dbReference type="FunFam" id="1.10.150.20:FF:000006">
    <property type="entry name" value="DNA ligase"/>
    <property type="match status" value="1"/>
</dbReference>
<dbReference type="FunFam" id="1.10.150.20:FF:000007">
    <property type="entry name" value="DNA ligase"/>
    <property type="match status" value="1"/>
</dbReference>
<dbReference type="FunFam" id="1.10.287.610:FF:000002">
    <property type="entry name" value="DNA ligase"/>
    <property type="match status" value="1"/>
</dbReference>
<dbReference type="FunFam" id="2.40.50.140:FF:000012">
    <property type="entry name" value="DNA ligase"/>
    <property type="match status" value="1"/>
</dbReference>
<dbReference type="FunFam" id="3.30.470.30:FF:000001">
    <property type="entry name" value="DNA ligase"/>
    <property type="match status" value="1"/>
</dbReference>
<dbReference type="FunFam" id="3.40.50.10190:FF:000054">
    <property type="entry name" value="DNA ligase"/>
    <property type="match status" value="1"/>
</dbReference>
<dbReference type="Gene3D" id="6.20.10.30">
    <property type="match status" value="1"/>
</dbReference>
<dbReference type="Gene3D" id="1.10.150.20">
    <property type="entry name" value="5' to 3' exonuclease, C-terminal subdomain"/>
    <property type="match status" value="2"/>
</dbReference>
<dbReference type="Gene3D" id="3.40.50.10190">
    <property type="entry name" value="BRCT domain"/>
    <property type="match status" value="1"/>
</dbReference>
<dbReference type="Gene3D" id="3.30.470.30">
    <property type="entry name" value="DNA ligase/mRNA capping enzyme"/>
    <property type="match status" value="1"/>
</dbReference>
<dbReference type="Gene3D" id="1.10.287.610">
    <property type="entry name" value="Helix hairpin bin"/>
    <property type="match status" value="1"/>
</dbReference>
<dbReference type="Gene3D" id="2.40.50.140">
    <property type="entry name" value="Nucleic acid-binding proteins"/>
    <property type="match status" value="1"/>
</dbReference>
<dbReference type="HAMAP" id="MF_01588">
    <property type="entry name" value="DNA_ligase_A"/>
    <property type="match status" value="1"/>
</dbReference>
<dbReference type="InterPro" id="IPR001357">
    <property type="entry name" value="BRCT_dom"/>
</dbReference>
<dbReference type="InterPro" id="IPR036420">
    <property type="entry name" value="BRCT_dom_sf"/>
</dbReference>
<dbReference type="InterPro" id="IPR041663">
    <property type="entry name" value="DisA/LigA_HHH"/>
</dbReference>
<dbReference type="InterPro" id="IPR001679">
    <property type="entry name" value="DNA_ligase"/>
</dbReference>
<dbReference type="InterPro" id="IPR018239">
    <property type="entry name" value="DNA_ligase_AS"/>
</dbReference>
<dbReference type="InterPro" id="IPR033136">
    <property type="entry name" value="DNA_ligase_CS"/>
</dbReference>
<dbReference type="InterPro" id="IPR013839">
    <property type="entry name" value="DNAligase_adenylation"/>
</dbReference>
<dbReference type="InterPro" id="IPR013840">
    <property type="entry name" value="DNAligase_N"/>
</dbReference>
<dbReference type="InterPro" id="IPR003583">
    <property type="entry name" value="Hlx-hairpin-Hlx_DNA-bd_motif"/>
</dbReference>
<dbReference type="InterPro" id="IPR012340">
    <property type="entry name" value="NA-bd_OB-fold"/>
</dbReference>
<dbReference type="InterPro" id="IPR004150">
    <property type="entry name" value="NAD_DNA_ligase_OB"/>
</dbReference>
<dbReference type="InterPro" id="IPR010994">
    <property type="entry name" value="RuvA_2-like"/>
</dbReference>
<dbReference type="InterPro" id="IPR004149">
    <property type="entry name" value="Znf_DNAligase_C4"/>
</dbReference>
<dbReference type="NCBIfam" id="TIGR00575">
    <property type="entry name" value="dnlj"/>
    <property type="match status" value="1"/>
</dbReference>
<dbReference type="NCBIfam" id="NF005932">
    <property type="entry name" value="PRK07956.1"/>
    <property type="match status" value="1"/>
</dbReference>
<dbReference type="PANTHER" id="PTHR23389">
    <property type="entry name" value="CHROMOSOME TRANSMISSION FIDELITY FACTOR 18"/>
    <property type="match status" value="1"/>
</dbReference>
<dbReference type="PANTHER" id="PTHR23389:SF9">
    <property type="entry name" value="DNA LIGASE"/>
    <property type="match status" value="1"/>
</dbReference>
<dbReference type="Pfam" id="PF00533">
    <property type="entry name" value="BRCT"/>
    <property type="match status" value="1"/>
</dbReference>
<dbReference type="Pfam" id="PF01653">
    <property type="entry name" value="DNA_ligase_aden"/>
    <property type="match status" value="1"/>
</dbReference>
<dbReference type="Pfam" id="PF03120">
    <property type="entry name" value="DNA_ligase_OB"/>
    <property type="match status" value="1"/>
</dbReference>
<dbReference type="Pfam" id="PF03119">
    <property type="entry name" value="DNA_ligase_ZBD"/>
    <property type="match status" value="1"/>
</dbReference>
<dbReference type="Pfam" id="PF12826">
    <property type="entry name" value="HHH_2"/>
    <property type="match status" value="1"/>
</dbReference>
<dbReference type="Pfam" id="PF14520">
    <property type="entry name" value="HHH_5"/>
    <property type="match status" value="1"/>
</dbReference>
<dbReference type="Pfam" id="PF22745">
    <property type="entry name" value="Nlig-Ia"/>
    <property type="match status" value="1"/>
</dbReference>
<dbReference type="PIRSF" id="PIRSF001604">
    <property type="entry name" value="LigA"/>
    <property type="match status" value="1"/>
</dbReference>
<dbReference type="SMART" id="SM00292">
    <property type="entry name" value="BRCT"/>
    <property type="match status" value="1"/>
</dbReference>
<dbReference type="SMART" id="SM00278">
    <property type="entry name" value="HhH1"/>
    <property type="match status" value="4"/>
</dbReference>
<dbReference type="SMART" id="SM00532">
    <property type="entry name" value="LIGANc"/>
    <property type="match status" value="1"/>
</dbReference>
<dbReference type="SUPFAM" id="SSF52113">
    <property type="entry name" value="BRCT domain"/>
    <property type="match status" value="1"/>
</dbReference>
<dbReference type="SUPFAM" id="SSF56091">
    <property type="entry name" value="DNA ligase/mRNA capping enzyme, catalytic domain"/>
    <property type="match status" value="1"/>
</dbReference>
<dbReference type="SUPFAM" id="SSF50249">
    <property type="entry name" value="Nucleic acid-binding proteins"/>
    <property type="match status" value="1"/>
</dbReference>
<dbReference type="SUPFAM" id="SSF47781">
    <property type="entry name" value="RuvA domain 2-like"/>
    <property type="match status" value="1"/>
</dbReference>
<dbReference type="PROSITE" id="PS50172">
    <property type="entry name" value="BRCT"/>
    <property type="match status" value="1"/>
</dbReference>
<dbReference type="PROSITE" id="PS01055">
    <property type="entry name" value="DNA_LIGASE_N1"/>
    <property type="match status" value="1"/>
</dbReference>
<dbReference type="PROSITE" id="PS01056">
    <property type="entry name" value="DNA_LIGASE_N2"/>
    <property type="match status" value="1"/>
</dbReference>
<reference key="1">
    <citation type="journal article" date="2011" name="J. Bacteriol.">
        <title>Complete genome sequence of the plant growth-promoting endophyte Burkholderia phytofirmans strain PsJN.</title>
        <authorList>
            <person name="Weilharter A."/>
            <person name="Mitter B."/>
            <person name="Shin M.V."/>
            <person name="Chain P.S."/>
            <person name="Nowak J."/>
            <person name="Sessitsch A."/>
        </authorList>
    </citation>
    <scope>NUCLEOTIDE SEQUENCE [LARGE SCALE GENOMIC DNA]</scope>
    <source>
        <strain>DSM 17436 / LMG 22146 / PsJN</strain>
    </source>
</reference>
<keyword id="KW-0227">DNA damage</keyword>
<keyword id="KW-0234">DNA repair</keyword>
<keyword id="KW-0235">DNA replication</keyword>
<keyword id="KW-0436">Ligase</keyword>
<keyword id="KW-0460">Magnesium</keyword>
<keyword id="KW-0464">Manganese</keyword>
<keyword id="KW-0479">Metal-binding</keyword>
<keyword id="KW-0520">NAD</keyword>
<keyword id="KW-0862">Zinc</keyword>